<sequence length="471" mass="52937">MQVTETLNEGLKREIKVVVPAGDLEAKLAERLETARGRARINGFRPGKVPTAHLRKMYGKSFMAEIVNEILNDSSRSILAERNEKSATQPEVIMSEDEKEAEKVLDGKADFVFSLNYEVLPAIEVKDFSKIAVTREVVDISDEEVDEQVKRIASSTRTFETKKGKAENEDRVTIDYLGKLDGEPFEGGADNDAQLVLGSGQFIPGFEEQLIGLKAGDEKVITVTFPAEYGAAHLAGKEATFDIKVKEVAKPNELVLDDETAKKLGIESLERLRQVVREQIESQYGQITRQKVKRQILDALDGDYQFETPQKLVDAEFNNIWQQINFDLQQAGRTFEDEETTEEAAREEYRKLAERRVRLGLVLSEIGEKAGVEVTEEELQRAVYDQVRRYPGQEKEIYDFLRRTPDAVANLRAPIFEEKVVDHLLANINVTDKKVSKEELTAEDEDAASEAKPAKKAAAKKKAEEGKSEEA</sequence>
<gene>
    <name evidence="1" type="primary">tig</name>
    <name type="ordered locus">BruAb1_0910</name>
</gene>
<proteinExistence type="inferred from homology"/>
<comment type="function">
    <text evidence="1">Involved in protein export. Acts as a chaperone by maintaining the newly synthesized protein in an open conformation. Functions as a peptidyl-prolyl cis-trans isomerase.</text>
</comment>
<comment type="catalytic activity">
    <reaction evidence="1">
        <text>[protein]-peptidylproline (omega=180) = [protein]-peptidylproline (omega=0)</text>
        <dbReference type="Rhea" id="RHEA:16237"/>
        <dbReference type="Rhea" id="RHEA-COMP:10747"/>
        <dbReference type="Rhea" id="RHEA-COMP:10748"/>
        <dbReference type="ChEBI" id="CHEBI:83833"/>
        <dbReference type="ChEBI" id="CHEBI:83834"/>
        <dbReference type="EC" id="5.2.1.8"/>
    </reaction>
</comment>
<comment type="subcellular location">
    <subcellularLocation>
        <location>Cytoplasm</location>
    </subcellularLocation>
    <text evidence="1">About half TF is bound to the ribosome near the polypeptide exit tunnel while the other half is free in the cytoplasm.</text>
</comment>
<comment type="domain">
    <text evidence="1">Consists of 3 domains; the N-terminus binds the ribosome, the middle domain has PPIase activity, while the C-terminus has intrinsic chaperone activity on its own.</text>
</comment>
<comment type="similarity">
    <text evidence="1">Belongs to the FKBP-type PPIase family. Tig subfamily.</text>
</comment>
<comment type="sequence caution" evidence="3">
    <conflict type="erroneous initiation">
        <sequence resource="EMBL-CDS" id="AAX74275"/>
    </conflict>
</comment>
<evidence type="ECO:0000255" key="1">
    <source>
        <dbReference type="HAMAP-Rule" id="MF_00303"/>
    </source>
</evidence>
<evidence type="ECO:0000256" key="2">
    <source>
        <dbReference type="SAM" id="MobiDB-lite"/>
    </source>
</evidence>
<evidence type="ECO:0000305" key="3"/>
<accession>Q57DK9</accession>
<feature type="chain" id="PRO_0000256532" description="Trigger factor">
    <location>
        <begin position="1"/>
        <end position="471"/>
    </location>
</feature>
<feature type="domain" description="PPIase FKBP-type" evidence="1">
    <location>
        <begin position="169"/>
        <end position="254"/>
    </location>
</feature>
<feature type="region of interest" description="Disordered" evidence="2">
    <location>
        <begin position="435"/>
        <end position="471"/>
    </location>
</feature>
<feature type="compositionally biased region" description="Basic and acidic residues" evidence="2">
    <location>
        <begin position="461"/>
        <end position="471"/>
    </location>
</feature>
<reference key="1">
    <citation type="journal article" date="2005" name="J. Bacteriol.">
        <title>Completion of the genome sequence of Brucella abortus and comparison to the highly similar genomes of Brucella melitensis and Brucella suis.</title>
        <authorList>
            <person name="Halling S.M."/>
            <person name="Peterson-Burch B.D."/>
            <person name="Bricker B.J."/>
            <person name="Zuerner R.L."/>
            <person name="Qing Z."/>
            <person name="Li L.-L."/>
            <person name="Kapur V."/>
            <person name="Alt D.P."/>
            <person name="Olsen S.C."/>
        </authorList>
    </citation>
    <scope>NUCLEOTIDE SEQUENCE [LARGE SCALE GENOMIC DNA]</scope>
    <source>
        <strain>9-941</strain>
    </source>
</reference>
<keyword id="KW-0131">Cell cycle</keyword>
<keyword id="KW-0132">Cell division</keyword>
<keyword id="KW-0143">Chaperone</keyword>
<keyword id="KW-0963">Cytoplasm</keyword>
<keyword id="KW-0413">Isomerase</keyword>
<keyword id="KW-0697">Rotamase</keyword>
<organism>
    <name type="scientific">Brucella abortus biovar 1 (strain 9-941)</name>
    <dbReference type="NCBI Taxonomy" id="262698"/>
    <lineage>
        <taxon>Bacteria</taxon>
        <taxon>Pseudomonadati</taxon>
        <taxon>Pseudomonadota</taxon>
        <taxon>Alphaproteobacteria</taxon>
        <taxon>Hyphomicrobiales</taxon>
        <taxon>Brucellaceae</taxon>
        <taxon>Brucella/Ochrobactrum group</taxon>
        <taxon>Brucella</taxon>
    </lineage>
</organism>
<dbReference type="EC" id="5.2.1.8" evidence="1"/>
<dbReference type="EMBL" id="AE017223">
    <property type="protein sequence ID" value="AAX74275.1"/>
    <property type="status" value="ALT_INIT"/>
    <property type="molecule type" value="Genomic_DNA"/>
</dbReference>
<dbReference type="SMR" id="Q57DK9"/>
<dbReference type="EnsemblBacteria" id="AAX74275">
    <property type="protein sequence ID" value="AAX74275"/>
    <property type="gene ID" value="BruAb1_0910"/>
</dbReference>
<dbReference type="KEGG" id="bmb:BruAb1_0910"/>
<dbReference type="HOGENOM" id="CLU_033058_2_2_5"/>
<dbReference type="PRO" id="PR:Q57DK9"/>
<dbReference type="Proteomes" id="UP000000540">
    <property type="component" value="Chromosome I"/>
</dbReference>
<dbReference type="GO" id="GO:0005737">
    <property type="term" value="C:cytoplasm"/>
    <property type="evidence" value="ECO:0007669"/>
    <property type="project" value="UniProtKB-SubCell"/>
</dbReference>
<dbReference type="GO" id="GO:0003755">
    <property type="term" value="F:peptidyl-prolyl cis-trans isomerase activity"/>
    <property type="evidence" value="ECO:0007669"/>
    <property type="project" value="UniProtKB-UniRule"/>
</dbReference>
<dbReference type="GO" id="GO:0044183">
    <property type="term" value="F:protein folding chaperone"/>
    <property type="evidence" value="ECO:0007669"/>
    <property type="project" value="TreeGrafter"/>
</dbReference>
<dbReference type="GO" id="GO:0043022">
    <property type="term" value="F:ribosome binding"/>
    <property type="evidence" value="ECO:0007669"/>
    <property type="project" value="TreeGrafter"/>
</dbReference>
<dbReference type="GO" id="GO:0051083">
    <property type="term" value="P:'de novo' cotranslational protein folding"/>
    <property type="evidence" value="ECO:0007669"/>
    <property type="project" value="TreeGrafter"/>
</dbReference>
<dbReference type="GO" id="GO:0051301">
    <property type="term" value="P:cell division"/>
    <property type="evidence" value="ECO:0007669"/>
    <property type="project" value="UniProtKB-KW"/>
</dbReference>
<dbReference type="GO" id="GO:0061077">
    <property type="term" value="P:chaperone-mediated protein folding"/>
    <property type="evidence" value="ECO:0007669"/>
    <property type="project" value="TreeGrafter"/>
</dbReference>
<dbReference type="GO" id="GO:0015031">
    <property type="term" value="P:protein transport"/>
    <property type="evidence" value="ECO:0007669"/>
    <property type="project" value="UniProtKB-UniRule"/>
</dbReference>
<dbReference type="GO" id="GO:0043335">
    <property type="term" value="P:protein unfolding"/>
    <property type="evidence" value="ECO:0007669"/>
    <property type="project" value="TreeGrafter"/>
</dbReference>
<dbReference type="FunFam" id="3.10.50.40:FF:000001">
    <property type="entry name" value="Trigger factor"/>
    <property type="match status" value="1"/>
</dbReference>
<dbReference type="Gene3D" id="3.10.50.40">
    <property type="match status" value="1"/>
</dbReference>
<dbReference type="Gene3D" id="3.30.70.1050">
    <property type="entry name" value="Trigger factor ribosome-binding domain"/>
    <property type="match status" value="1"/>
</dbReference>
<dbReference type="Gene3D" id="1.10.3120.10">
    <property type="entry name" value="Trigger factor, C-terminal domain"/>
    <property type="match status" value="1"/>
</dbReference>
<dbReference type="HAMAP" id="MF_00303">
    <property type="entry name" value="Trigger_factor_Tig"/>
    <property type="match status" value="1"/>
</dbReference>
<dbReference type="InterPro" id="IPR046357">
    <property type="entry name" value="PPIase_dom_sf"/>
</dbReference>
<dbReference type="InterPro" id="IPR001179">
    <property type="entry name" value="PPIase_FKBP_dom"/>
</dbReference>
<dbReference type="InterPro" id="IPR005215">
    <property type="entry name" value="Trig_fac"/>
</dbReference>
<dbReference type="InterPro" id="IPR008880">
    <property type="entry name" value="Trigger_fac_C"/>
</dbReference>
<dbReference type="InterPro" id="IPR037041">
    <property type="entry name" value="Trigger_fac_C_sf"/>
</dbReference>
<dbReference type="InterPro" id="IPR008881">
    <property type="entry name" value="Trigger_fac_ribosome-bd_bac"/>
</dbReference>
<dbReference type="InterPro" id="IPR036611">
    <property type="entry name" value="Trigger_fac_ribosome-bd_sf"/>
</dbReference>
<dbReference type="InterPro" id="IPR027304">
    <property type="entry name" value="Trigger_fact/SurA_dom_sf"/>
</dbReference>
<dbReference type="NCBIfam" id="TIGR00115">
    <property type="entry name" value="tig"/>
    <property type="match status" value="1"/>
</dbReference>
<dbReference type="PANTHER" id="PTHR30560">
    <property type="entry name" value="TRIGGER FACTOR CHAPERONE AND PEPTIDYL-PROLYL CIS/TRANS ISOMERASE"/>
    <property type="match status" value="1"/>
</dbReference>
<dbReference type="PANTHER" id="PTHR30560:SF3">
    <property type="entry name" value="TRIGGER FACTOR-LIKE PROTEIN TIG, CHLOROPLASTIC"/>
    <property type="match status" value="1"/>
</dbReference>
<dbReference type="Pfam" id="PF00254">
    <property type="entry name" value="FKBP_C"/>
    <property type="match status" value="1"/>
</dbReference>
<dbReference type="Pfam" id="PF05698">
    <property type="entry name" value="Trigger_C"/>
    <property type="match status" value="1"/>
</dbReference>
<dbReference type="Pfam" id="PF05697">
    <property type="entry name" value="Trigger_N"/>
    <property type="match status" value="1"/>
</dbReference>
<dbReference type="PIRSF" id="PIRSF003095">
    <property type="entry name" value="Trigger_factor"/>
    <property type="match status" value="1"/>
</dbReference>
<dbReference type="SUPFAM" id="SSF54534">
    <property type="entry name" value="FKBP-like"/>
    <property type="match status" value="1"/>
</dbReference>
<dbReference type="SUPFAM" id="SSF109998">
    <property type="entry name" value="Triger factor/SurA peptide-binding domain-like"/>
    <property type="match status" value="1"/>
</dbReference>
<dbReference type="SUPFAM" id="SSF102735">
    <property type="entry name" value="Trigger factor ribosome-binding domain"/>
    <property type="match status" value="1"/>
</dbReference>
<dbReference type="PROSITE" id="PS50059">
    <property type="entry name" value="FKBP_PPIASE"/>
    <property type="match status" value="1"/>
</dbReference>
<protein>
    <recommendedName>
        <fullName evidence="1">Trigger factor</fullName>
        <shortName evidence="1">TF</shortName>
        <ecNumber evidence="1">5.2.1.8</ecNumber>
    </recommendedName>
    <alternativeName>
        <fullName evidence="1">PPIase</fullName>
    </alternativeName>
</protein>
<name>TIG_BRUAB</name>